<dbReference type="PIR" id="A01939">
    <property type="entry name" value="KVMS85"/>
</dbReference>
<dbReference type="SMR" id="P01673"/>
<dbReference type="FunCoup" id="P01673">
    <property type="interactions" value="707"/>
</dbReference>
<dbReference type="jPOST" id="P01673"/>
<dbReference type="InParanoid" id="P01673"/>
<dbReference type="Proteomes" id="UP000000589">
    <property type="component" value="Unplaced"/>
</dbReference>
<dbReference type="RNAct" id="P01673">
    <property type="molecule type" value="protein"/>
</dbReference>
<dbReference type="GO" id="GO:0019814">
    <property type="term" value="C:immunoglobulin complex"/>
    <property type="evidence" value="ECO:0000318"/>
    <property type="project" value="GO_Central"/>
</dbReference>
<dbReference type="GO" id="GO:0002250">
    <property type="term" value="P:adaptive immune response"/>
    <property type="evidence" value="ECO:0007669"/>
    <property type="project" value="UniProtKB-KW"/>
</dbReference>
<dbReference type="GO" id="GO:0006955">
    <property type="term" value="P:immune response"/>
    <property type="evidence" value="ECO:0000318"/>
    <property type="project" value="GO_Central"/>
</dbReference>
<dbReference type="CDD" id="cd04980">
    <property type="entry name" value="IgV_L_kappa"/>
    <property type="match status" value="1"/>
</dbReference>
<dbReference type="FunFam" id="2.60.40.10:FF:000350">
    <property type="entry name" value="Immunoglobulin kappa chain variable 18-36"/>
    <property type="match status" value="1"/>
</dbReference>
<dbReference type="Gene3D" id="2.60.40.10">
    <property type="entry name" value="Immunoglobulins"/>
    <property type="match status" value="1"/>
</dbReference>
<dbReference type="InterPro" id="IPR007110">
    <property type="entry name" value="Ig-like_dom"/>
</dbReference>
<dbReference type="InterPro" id="IPR036179">
    <property type="entry name" value="Ig-like_dom_sf"/>
</dbReference>
<dbReference type="InterPro" id="IPR013783">
    <property type="entry name" value="Ig-like_fold"/>
</dbReference>
<dbReference type="InterPro" id="IPR003599">
    <property type="entry name" value="Ig_sub"/>
</dbReference>
<dbReference type="InterPro" id="IPR013106">
    <property type="entry name" value="Ig_V-set"/>
</dbReference>
<dbReference type="InterPro" id="IPR050150">
    <property type="entry name" value="IgV_Light_Chain"/>
</dbReference>
<dbReference type="PANTHER" id="PTHR23267">
    <property type="entry name" value="IMMUNOGLOBULIN LIGHT CHAIN"/>
    <property type="match status" value="1"/>
</dbReference>
<dbReference type="Pfam" id="PF07686">
    <property type="entry name" value="V-set"/>
    <property type="match status" value="1"/>
</dbReference>
<dbReference type="SMART" id="SM00409">
    <property type="entry name" value="IG"/>
    <property type="match status" value="1"/>
</dbReference>
<dbReference type="SMART" id="SM00406">
    <property type="entry name" value="IGv"/>
    <property type="match status" value="1"/>
</dbReference>
<dbReference type="SUPFAM" id="SSF48726">
    <property type="entry name" value="Immunoglobulin"/>
    <property type="match status" value="1"/>
</dbReference>
<dbReference type="PROSITE" id="PS50835">
    <property type="entry name" value="IG_LIKE"/>
    <property type="match status" value="1"/>
</dbReference>
<reference key="1">
    <citation type="journal article" date="1978" name="Nature">
        <title>Rearrangement of genetic information may produce immunoglobulin diversity.</title>
        <authorList>
            <person name="Weigert M."/>
            <person name="Gatmaitan L."/>
            <person name="Loh E."/>
            <person name="Schilling J."/>
            <person name="Hood L.E."/>
        </authorList>
    </citation>
    <scope>PROTEIN SEQUENCE</scope>
</reference>
<organism>
    <name type="scientific">Mus musculus</name>
    <name type="common">Mouse</name>
    <dbReference type="NCBI Taxonomy" id="10090"/>
    <lineage>
        <taxon>Eukaryota</taxon>
        <taxon>Metazoa</taxon>
        <taxon>Chordata</taxon>
        <taxon>Craniata</taxon>
        <taxon>Vertebrata</taxon>
        <taxon>Euteleostomi</taxon>
        <taxon>Mammalia</taxon>
        <taxon>Eutheria</taxon>
        <taxon>Euarchontoglires</taxon>
        <taxon>Glires</taxon>
        <taxon>Rodentia</taxon>
        <taxon>Myomorpha</taxon>
        <taxon>Muroidea</taxon>
        <taxon>Muridae</taxon>
        <taxon>Murinae</taxon>
        <taxon>Mus</taxon>
        <taxon>Mus</taxon>
    </lineage>
</organism>
<accession>P01673</accession>
<comment type="miscellaneous">
    <text>The PC 4285 and PC 4039 sequences are identical.</text>
</comment>
<feature type="chain" id="PRO_0000059795" description="Ig kappa chain V-III region PC 2485/PC 4039">
    <location>
        <begin position="1"/>
        <end position="111" status="greater than"/>
    </location>
</feature>
<feature type="region of interest" description="Framework-1">
    <location>
        <begin position="1"/>
        <end position="23"/>
    </location>
</feature>
<feature type="region of interest" description="Complementarity-determining-1">
    <location>
        <begin position="24"/>
        <end position="38"/>
    </location>
</feature>
<feature type="region of interest" description="Framework-2">
    <location>
        <begin position="39"/>
        <end position="53"/>
    </location>
</feature>
<feature type="region of interest" description="Complementarity-determining-2">
    <location>
        <begin position="54"/>
        <end position="60"/>
    </location>
</feature>
<feature type="region of interest" description="Framework-3">
    <location>
        <begin position="61"/>
        <end position="92"/>
    </location>
</feature>
<feature type="region of interest" description="Complementarity-determining-3">
    <location>
        <begin position="93"/>
        <end position="101"/>
    </location>
</feature>
<feature type="region of interest" description="Framework-4">
    <location>
        <begin position="102"/>
        <end position="111"/>
    </location>
</feature>
<feature type="disulfide bond" evidence="1">
    <location>
        <begin position="23"/>
        <end position="92"/>
    </location>
</feature>
<feature type="non-terminal residue">
    <location>
        <position position="111"/>
    </location>
</feature>
<name>KV3AL_MOUSE</name>
<proteinExistence type="evidence at protein level"/>
<sequence length="111" mass="11987">DIVLTQSPASLAVSLGQRATISCRASKSVSTSGYSYMHWYQQKPGQPPKLLIYLASSLESGVPARFSGSGSGTDFTLNIQPVEEEDAAIYYCQHSRELPLTFGAGTKLELK</sequence>
<evidence type="ECO:0000255" key="1">
    <source>
        <dbReference type="PROSITE-ProRule" id="PRU00114"/>
    </source>
</evidence>
<keyword id="KW-1064">Adaptive immunity</keyword>
<keyword id="KW-0903">Direct protein sequencing</keyword>
<keyword id="KW-1015">Disulfide bond</keyword>
<keyword id="KW-0391">Immunity</keyword>
<keyword id="KW-1280">Immunoglobulin</keyword>
<keyword id="KW-1185">Reference proteome</keyword>
<protein>
    <recommendedName>
        <fullName>Ig kappa chain V-III region PC 2485/PC 4039</fullName>
    </recommendedName>
</protein>